<sequence>MSLLIDFIDETEEVKEEYVNLIREILGKAAQMEKIEDGAELSVTFVDNERIREINRDYRDKDQPTDVISFAMEEMGEGEMEIVGVEMPRMLGDLIISIPRAKEQAEEYGHSFDRELGFLALHGFLHLLGYDHMTEEDEKEMFGRQKEILEAFGLGR</sequence>
<comment type="function">
    <text evidence="1">Single strand-specific metallo-endoribonuclease involved in late-stage 70S ribosome quality control and in maturation of the 3' terminus of the 16S rRNA.</text>
</comment>
<comment type="cofactor">
    <cofactor evidence="1">
        <name>Zn(2+)</name>
        <dbReference type="ChEBI" id="CHEBI:29105"/>
    </cofactor>
    <text evidence="1">Binds 1 zinc ion.</text>
</comment>
<comment type="subcellular location">
    <subcellularLocation>
        <location evidence="1">Cytoplasm</location>
    </subcellularLocation>
</comment>
<comment type="similarity">
    <text evidence="1">Belongs to the endoribonuclease YbeY family.</text>
</comment>
<feature type="chain" id="PRO_1000199947" description="Endoribonuclease YbeY">
    <location>
        <begin position="1"/>
        <end position="156"/>
    </location>
</feature>
<feature type="binding site" evidence="1">
    <location>
        <position position="122"/>
    </location>
    <ligand>
        <name>Zn(2+)</name>
        <dbReference type="ChEBI" id="CHEBI:29105"/>
        <note>catalytic</note>
    </ligand>
</feature>
<feature type="binding site" evidence="1">
    <location>
        <position position="126"/>
    </location>
    <ligand>
        <name>Zn(2+)</name>
        <dbReference type="ChEBI" id="CHEBI:29105"/>
        <note>catalytic</note>
    </ligand>
</feature>
<feature type="binding site" evidence="1">
    <location>
        <position position="132"/>
    </location>
    <ligand>
        <name>Zn(2+)</name>
        <dbReference type="ChEBI" id="CHEBI:29105"/>
        <note>catalytic</note>
    </ligand>
</feature>
<evidence type="ECO:0000255" key="1">
    <source>
        <dbReference type="HAMAP-Rule" id="MF_00009"/>
    </source>
</evidence>
<dbReference type="EC" id="3.1.-.-" evidence="1"/>
<dbReference type="EMBL" id="CP001215">
    <property type="protein sequence ID" value="ACP16806.1"/>
    <property type="molecule type" value="Genomic_DNA"/>
</dbReference>
<dbReference type="RefSeq" id="WP_000054692.1">
    <property type="nucleotide sequence ID" value="NC_012581.1"/>
</dbReference>
<dbReference type="SMR" id="C3L5Q6"/>
<dbReference type="GeneID" id="93006797"/>
<dbReference type="KEGG" id="bah:BAMEG_4565"/>
<dbReference type="HOGENOM" id="CLU_106710_3_0_9"/>
<dbReference type="GO" id="GO:0005737">
    <property type="term" value="C:cytoplasm"/>
    <property type="evidence" value="ECO:0007669"/>
    <property type="project" value="UniProtKB-SubCell"/>
</dbReference>
<dbReference type="GO" id="GO:0004222">
    <property type="term" value="F:metalloendopeptidase activity"/>
    <property type="evidence" value="ECO:0007669"/>
    <property type="project" value="InterPro"/>
</dbReference>
<dbReference type="GO" id="GO:0004521">
    <property type="term" value="F:RNA endonuclease activity"/>
    <property type="evidence" value="ECO:0007669"/>
    <property type="project" value="UniProtKB-UniRule"/>
</dbReference>
<dbReference type="GO" id="GO:0008270">
    <property type="term" value="F:zinc ion binding"/>
    <property type="evidence" value="ECO:0007669"/>
    <property type="project" value="UniProtKB-UniRule"/>
</dbReference>
<dbReference type="GO" id="GO:0006364">
    <property type="term" value="P:rRNA processing"/>
    <property type="evidence" value="ECO:0007669"/>
    <property type="project" value="UniProtKB-UniRule"/>
</dbReference>
<dbReference type="Gene3D" id="3.40.390.30">
    <property type="entry name" value="Metalloproteases ('zincins'), catalytic domain"/>
    <property type="match status" value="1"/>
</dbReference>
<dbReference type="HAMAP" id="MF_00009">
    <property type="entry name" value="Endoribonucl_YbeY"/>
    <property type="match status" value="1"/>
</dbReference>
<dbReference type="InterPro" id="IPR023091">
    <property type="entry name" value="MetalPrtase_cat_dom_sf_prd"/>
</dbReference>
<dbReference type="InterPro" id="IPR002036">
    <property type="entry name" value="YbeY"/>
</dbReference>
<dbReference type="InterPro" id="IPR020549">
    <property type="entry name" value="YbeY_CS"/>
</dbReference>
<dbReference type="NCBIfam" id="TIGR00043">
    <property type="entry name" value="rRNA maturation RNase YbeY"/>
    <property type="match status" value="1"/>
</dbReference>
<dbReference type="PANTHER" id="PTHR46986">
    <property type="entry name" value="ENDORIBONUCLEASE YBEY, CHLOROPLASTIC"/>
    <property type="match status" value="1"/>
</dbReference>
<dbReference type="PANTHER" id="PTHR46986:SF1">
    <property type="entry name" value="ENDORIBONUCLEASE YBEY, CHLOROPLASTIC"/>
    <property type="match status" value="1"/>
</dbReference>
<dbReference type="Pfam" id="PF02130">
    <property type="entry name" value="YbeY"/>
    <property type="match status" value="1"/>
</dbReference>
<dbReference type="SUPFAM" id="SSF55486">
    <property type="entry name" value="Metalloproteases ('zincins'), catalytic domain"/>
    <property type="match status" value="1"/>
</dbReference>
<dbReference type="PROSITE" id="PS01306">
    <property type="entry name" value="UPF0054"/>
    <property type="match status" value="1"/>
</dbReference>
<gene>
    <name evidence="1" type="primary">ybeY</name>
    <name type="ordered locus">BAMEG_4565</name>
</gene>
<keyword id="KW-0963">Cytoplasm</keyword>
<keyword id="KW-0255">Endonuclease</keyword>
<keyword id="KW-0378">Hydrolase</keyword>
<keyword id="KW-0479">Metal-binding</keyword>
<keyword id="KW-0540">Nuclease</keyword>
<keyword id="KW-0690">Ribosome biogenesis</keyword>
<keyword id="KW-0698">rRNA processing</keyword>
<keyword id="KW-0862">Zinc</keyword>
<name>YBEY_BACAC</name>
<protein>
    <recommendedName>
        <fullName evidence="1">Endoribonuclease YbeY</fullName>
        <ecNumber evidence="1">3.1.-.-</ecNumber>
    </recommendedName>
</protein>
<accession>C3L5Q6</accession>
<reference key="1">
    <citation type="submission" date="2008-10" db="EMBL/GenBank/DDBJ databases">
        <title>Genome sequence of Bacillus anthracis str. CDC 684.</title>
        <authorList>
            <person name="Dodson R.J."/>
            <person name="Munk A.C."/>
            <person name="Brettin T."/>
            <person name="Bruce D."/>
            <person name="Detter C."/>
            <person name="Tapia R."/>
            <person name="Han C."/>
            <person name="Sutton G."/>
            <person name="Sims D."/>
        </authorList>
    </citation>
    <scope>NUCLEOTIDE SEQUENCE [LARGE SCALE GENOMIC DNA]</scope>
    <source>
        <strain>CDC 684 / NRRL 3495</strain>
    </source>
</reference>
<proteinExistence type="inferred from homology"/>
<organism>
    <name type="scientific">Bacillus anthracis (strain CDC 684 / NRRL 3495)</name>
    <dbReference type="NCBI Taxonomy" id="568206"/>
    <lineage>
        <taxon>Bacteria</taxon>
        <taxon>Bacillati</taxon>
        <taxon>Bacillota</taxon>
        <taxon>Bacilli</taxon>
        <taxon>Bacillales</taxon>
        <taxon>Bacillaceae</taxon>
        <taxon>Bacillus</taxon>
        <taxon>Bacillus cereus group</taxon>
    </lineage>
</organism>